<dbReference type="EC" id="2.1.1.163" evidence="1"/>
<dbReference type="EC" id="2.1.1.201" evidence="1"/>
<dbReference type="EMBL" id="CP000803">
    <property type="protein sequence ID" value="ABU60904.1"/>
    <property type="molecule type" value="Genomic_DNA"/>
</dbReference>
<dbReference type="RefSeq" id="WP_003014645.1">
    <property type="nucleotide sequence ID" value="NC_009749.1"/>
</dbReference>
<dbReference type="SMR" id="A7NAA1"/>
<dbReference type="KEGG" id="fta:FTA_0427"/>
<dbReference type="HOGENOM" id="CLU_037990_0_0_6"/>
<dbReference type="UniPathway" id="UPA00079">
    <property type="reaction ID" value="UER00169"/>
</dbReference>
<dbReference type="UniPathway" id="UPA00232"/>
<dbReference type="GO" id="GO:0008425">
    <property type="term" value="F:2-methoxy-6-polyprenyl-1,4-benzoquinol methyltransferase activity"/>
    <property type="evidence" value="ECO:0007669"/>
    <property type="project" value="UniProtKB-UniRule"/>
</dbReference>
<dbReference type="GO" id="GO:0043770">
    <property type="term" value="F:demethylmenaquinone methyltransferase activity"/>
    <property type="evidence" value="ECO:0007669"/>
    <property type="project" value="UniProtKB-UniRule"/>
</dbReference>
<dbReference type="GO" id="GO:0009060">
    <property type="term" value="P:aerobic respiration"/>
    <property type="evidence" value="ECO:0007669"/>
    <property type="project" value="UniProtKB-UniRule"/>
</dbReference>
<dbReference type="GO" id="GO:0009234">
    <property type="term" value="P:menaquinone biosynthetic process"/>
    <property type="evidence" value="ECO:0007669"/>
    <property type="project" value="UniProtKB-UniRule"/>
</dbReference>
<dbReference type="GO" id="GO:0032259">
    <property type="term" value="P:methylation"/>
    <property type="evidence" value="ECO:0007669"/>
    <property type="project" value="UniProtKB-KW"/>
</dbReference>
<dbReference type="CDD" id="cd02440">
    <property type="entry name" value="AdoMet_MTases"/>
    <property type="match status" value="1"/>
</dbReference>
<dbReference type="FunFam" id="3.40.50.150:FF:000014">
    <property type="entry name" value="Ubiquinone/menaquinone biosynthesis C-methyltransferase UbiE"/>
    <property type="match status" value="1"/>
</dbReference>
<dbReference type="Gene3D" id="3.40.50.150">
    <property type="entry name" value="Vaccinia Virus protein VP39"/>
    <property type="match status" value="1"/>
</dbReference>
<dbReference type="HAMAP" id="MF_01813">
    <property type="entry name" value="MenG_UbiE_methyltr"/>
    <property type="match status" value="1"/>
</dbReference>
<dbReference type="InterPro" id="IPR029063">
    <property type="entry name" value="SAM-dependent_MTases_sf"/>
</dbReference>
<dbReference type="InterPro" id="IPR004033">
    <property type="entry name" value="UbiE/COQ5_MeTrFase"/>
</dbReference>
<dbReference type="InterPro" id="IPR023576">
    <property type="entry name" value="UbiE/COQ5_MeTrFase_CS"/>
</dbReference>
<dbReference type="NCBIfam" id="TIGR01934">
    <property type="entry name" value="MenG_MenH_UbiE"/>
    <property type="match status" value="1"/>
</dbReference>
<dbReference type="NCBIfam" id="NF001240">
    <property type="entry name" value="PRK00216.1-1"/>
    <property type="match status" value="1"/>
</dbReference>
<dbReference type="NCBIfam" id="NF001242">
    <property type="entry name" value="PRK00216.1-3"/>
    <property type="match status" value="1"/>
</dbReference>
<dbReference type="NCBIfam" id="NF001244">
    <property type="entry name" value="PRK00216.1-5"/>
    <property type="match status" value="1"/>
</dbReference>
<dbReference type="PANTHER" id="PTHR43591:SF24">
    <property type="entry name" value="2-METHOXY-6-POLYPRENYL-1,4-BENZOQUINOL METHYLASE, MITOCHONDRIAL"/>
    <property type="match status" value="1"/>
</dbReference>
<dbReference type="PANTHER" id="PTHR43591">
    <property type="entry name" value="METHYLTRANSFERASE"/>
    <property type="match status" value="1"/>
</dbReference>
<dbReference type="Pfam" id="PF01209">
    <property type="entry name" value="Ubie_methyltran"/>
    <property type="match status" value="1"/>
</dbReference>
<dbReference type="SUPFAM" id="SSF53335">
    <property type="entry name" value="S-adenosyl-L-methionine-dependent methyltransferases"/>
    <property type="match status" value="1"/>
</dbReference>
<dbReference type="PROSITE" id="PS51608">
    <property type="entry name" value="SAM_MT_UBIE"/>
    <property type="match status" value="1"/>
</dbReference>
<dbReference type="PROSITE" id="PS01183">
    <property type="entry name" value="UBIE_1"/>
    <property type="match status" value="1"/>
</dbReference>
<dbReference type="PROSITE" id="PS01184">
    <property type="entry name" value="UBIE_2"/>
    <property type="match status" value="1"/>
</dbReference>
<feature type="chain" id="PRO_1000056249" description="Ubiquinone/menaquinone biosynthesis C-methyltransferase UbiE">
    <location>
        <begin position="1"/>
        <end position="250"/>
    </location>
</feature>
<feature type="binding site" evidence="1">
    <location>
        <position position="73"/>
    </location>
    <ligand>
        <name>S-adenosyl-L-methionine</name>
        <dbReference type="ChEBI" id="CHEBI:59789"/>
    </ligand>
</feature>
<feature type="binding site" evidence="1">
    <location>
        <position position="94"/>
    </location>
    <ligand>
        <name>S-adenosyl-L-methionine</name>
        <dbReference type="ChEBI" id="CHEBI:59789"/>
    </ligand>
</feature>
<feature type="binding site" evidence="1">
    <location>
        <begin position="122"/>
        <end position="123"/>
    </location>
    <ligand>
        <name>S-adenosyl-L-methionine</name>
        <dbReference type="ChEBI" id="CHEBI:59789"/>
    </ligand>
</feature>
<feature type="binding site" evidence="1">
    <location>
        <position position="139"/>
    </location>
    <ligand>
        <name>S-adenosyl-L-methionine</name>
        <dbReference type="ChEBI" id="CHEBI:59789"/>
    </ligand>
</feature>
<name>UBIE_FRATF</name>
<sequence length="250" mass="28004">MSKENKTTDFGFTQVPWEEKQKKVAGVFHSVAAKYDLMNDLMSFGIHRIWKKQTIAKSGVRKGDNVLDLAGGTGDLAYKFCQMVGQQGKVILSDINSSMLEVGKEKLTNKGCVGNIEYVQANAECLPFPDNYFDCITISFGLRNVTDKDKALASMCRVLKPGGRLLVLEFSKPIIPLLSKVYDEYSFKALPFLGKIITQDAESYKYLAESICKHPDQQTLKQMMYDAGFDNVEYQNMTGGIVALHIGYKY</sequence>
<organism>
    <name type="scientific">Francisella tularensis subsp. holarctica (strain FTNF002-00 / FTA)</name>
    <dbReference type="NCBI Taxonomy" id="458234"/>
    <lineage>
        <taxon>Bacteria</taxon>
        <taxon>Pseudomonadati</taxon>
        <taxon>Pseudomonadota</taxon>
        <taxon>Gammaproteobacteria</taxon>
        <taxon>Thiotrichales</taxon>
        <taxon>Francisellaceae</taxon>
        <taxon>Francisella</taxon>
    </lineage>
</organism>
<protein>
    <recommendedName>
        <fullName evidence="1">Ubiquinone/menaquinone biosynthesis C-methyltransferase UbiE</fullName>
        <ecNumber evidence="1">2.1.1.163</ecNumber>
        <ecNumber evidence="1">2.1.1.201</ecNumber>
    </recommendedName>
    <alternativeName>
        <fullName evidence="1">2-methoxy-6-polyprenyl-1,4-benzoquinol methylase</fullName>
    </alternativeName>
    <alternativeName>
        <fullName evidence="1">Demethylmenaquinone methyltransferase</fullName>
    </alternativeName>
</protein>
<evidence type="ECO:0000255" key="1">
    <source>
        <dbReference type="HAMAP-Rule" id="MF_01813"/>
    </source>
</evidence>
<comment type="function">
    <text evidence="1">Methyltransferase required for the conversion of demethylmenaquinol (DMKH2) to menaquinol (MKH2) and the conversion of 2-polyprenyl-6-methoxy-1,4-benzoquinol (DDMQH2) to 2-polyprenyl-3-methyl-6-methoxy-1,4-benzoquinol (DMQH2).</text>
</comment>
<comment type="catalytic activity">
    <reaction evidence="1">
        <text>a 2-demethylmenaquinol + S-adenosyl-L-methionine = a menaquinol + S-adenosyl-L-homocysteine + H(+)</text>
        <dbReference type="Rhea" id="RHEA:42640"/>
        <dbReference type="Rhea" id="RHEA-COMP:9539"/>
        <dbReference type="Rhea" id="RHEA-COMP:9563"/>
        <dbReference type="ChEBI" id="CHEBI:15378"/>
        <dbReference type="ChEBI" id="CHEBI:18151"/>
        <dbReference type="ChEBI" id="CHEBI:55437"/>
        <dbReference type="ChEBI" id="CHEBI:57856"/>
        <dbReference type="ChEBI" id="CHEBI:59789"/>
        <dbReference type="EC" id="2.1.1.163"/>
    </reaction>
</comment>
<comment type="catalytic activity">
    <reaction evidence="1">
        <text>a 2-methoxy-6-(all-trans-polyprenyl)benzene-1,4-diol + S-adenosyl-L-methionine = a 5-methoxy-2-methyl-3-(all-trans-polyprenyl)benzene-1,4-diol + S-adenosyl-L-homocysteine + H(+)</text>
        <dbReference type="Rhea" id="RHEA:28286"/>
        <dbReference type="Rhea" id="RHEA-COMP:10858"/>
        <dbReference type="Rhea" id="RHEA-COMP:10859"/>
        <dbReference type="ChEBI" id="CHEBI:15378"/>
        <dbReference type="ChEBI" id="CHEBI:57856"/>
        <dbReference type="ChEBI" id="CHEBI:59789"/>
        <dbReference type="ChEBI" id="CHEBI:84166"/>
        <dbReference type="ChEBI" id="CHEBI:84167"/>
        <dbReference type="EC" id="2.1.1.201"/>
    </reaction>
</comment>
<comment type="pathway">
    <text evidence="1">Quinol/quinone metabolism; menaquinone biosynthesis; menaquinol from 1,4-dihydroxy-2-naphthoate: step 2/2.</text>
</comment>
<comment type="pathway">
    <text evidence="1">Cofactor biosynthesis; ubiquinone biosynthesis.</text>
</comment>
<comment type="similarity">
    <text evidence="1">Belongs to the class I-like SAM-binding methyltransferase superfamily. MenG/UbiE family.</text>
</comment>
<accession>A7NAA1</accession>
<gene>
    <name evidence="1" type="primary">ubiE</name>
    <name type="ordered locus">FTA_0427</name>
</gene>
<reference key="1">
    <citation type="journal article" date="2009" name="PLoS ONE">
        <title>Complete genome sequence of Francisella tularensis subspecies holarctica FTNF002-00.</title>
        <authorList>
            <person name="Barabote R.D."/>
            <person name="Xie G."/>
            <person name="Brettin T.S."/>
            <person name="Hinrichs S.H."/>
            <person name="Fey P.D."/>
            <person name="Jay J.J."/>
            <person name="Engle J.L."/>
            <person name="Godbole S.D."/>
            <person name="Noronha J.M."/>
            <person name="Scheuermann R.H."/>
            <person name="Zhou L.W."/>
            <person name="Lion C."/>
            <person name="Dempsey M.P."/>
        </authorList>
    </citation>
    <scope>NUCLEOTIDE SEQUENCE [LARGE SCALE GENOMIC DNA]</scope>
    <source>
        <strain>FTNF002-00 / FTA</strain>
    </source>
</reference>
<keyword id="KW-0474">Menaquinone biosynthesis</keyword>
<keyword id="KW-0489">Methyltransferase</keyword>
<keyword id="KW-0949">S-adenosyl-L-methionine</keyword>
<keyword id="KW-0808">Transferase</keyword>
<keyword id="KW-0831">Ubiquinone biosynthesis</keyword>
<proteinExistence type="inferred from homology"/>